<keyword id="KW-0067">ATP-binding</keyword>
<keyword id="KW-0406">Ion transport</keyword>
<keyword id="KW-0408">Iron</keyword>
<keyword id="KW-0410">Iron transport</keyword>
<keyword id="KW-0472">Membrane</keyword>
<keyword id="KW-0496">Mitochondrion</keyword>
<keyword id="KW-0999">Mitochondrion inner membrane</keyword>
<keyword id="KW-0547">Nucleotide-binding</keyword>
<keyword id="KW-1185">Reference proteome</keyword>
<keyword id="KW-0809">Transit peptide</keyword>
<keyword id="KW-0812">Transmembrane</keyword>
<keyword id="KW-1133">Transmembrane helix</keyword>
<keyword id="KW-0813">Transport</keyword>
<dbReference type="EMBL" id="AF287698">
    <property type="protein sequence ID" value="AAG09828.1"/>
    <property type="molecule type" value="mRNA"/>
</dbReference>
<dbReference type="EMBL" id="AL161573">
    <property type="protein sequence ID" value="CAB81450.1"/>
    <property type="molecule type" value="Genomic_DNA"/>
</dbReference>
<dbReference type="EMBL" id="CP002687">
    <property type="protein sequence ID" value="AEE85513.1"/>
    <property type="molecule type" value="Genomic_DNA"/>
</dbReference>
<dbReference type="PIR" id="T10656">
    <property type="entry name" value="T10656"/>
</dbReference>
<dbReference type="RefSeq" id="NP_194591.1">
    <property type="nucleotide sequence ID" value="NM_119004.1"/>
</dbReference>
<dbReference type="SMR" id="Q9M0G9"/>
<dbReference type="FunCoup" id="Q9M0G9">
    <property type="interactions" value="2984"/>
</dbReference>
<dbReference type="STRING" id="3702.Q9M0G9"/>
<dbReference type="GlyGen" id="Q9M0G9">
    <property type="glycosylation" value="2 sites"/>
</dbReference>
<dbReference type="iPTMnet" id="Q9M0G9"/>
<dbReference type="PaxDb" id="3702-AT4G28620.1"/>
<dbReference type="ProteomicsDB" id="245101"/>
<dbReference type="EnsemblPlants" id="AT4G28620.1">
    <property type="protein sequence ID" value="AT4G28620.1"/>
    <property type="gene ID" value="AT4G28620"/>
</dbReference>
<dbReference type="GeneID" id="828980"/>
<dbReference type="Gramene" id="AT4G28620.1">
    <property type="protein sequence ID" value="AT4G28620.1"/>
    <property type="gene ID" value="AT4G28620"/>
</dbReference>
<dbReference type="KEGG" id="ath:AT4G28620"/>
<dbReference type="Araport" id="AT4G28620"/>
<dbReference type="TAIR" id="AT4G28620">
    <property type="gene designation" value="ABCB24"/>
</dbReference>
<dbReference type="eggNOG" id="KOG0057">
    <property type="taxonomic scope" value="Eukaryota"/>
</dbReference>
<dbReference type="HOGENOM" id="CLU_000604_84_1_1"/>
<dbReference type="InParanoid" id="Q9M0G9"/>
<dbReference type="OMA" id="QWRIKIR"/>
<dbReference type="PhylomeDB" id="Q9M0G9"/>
<dbReference type="BioCyc" id="ARA:AT4G28620-MONOMER"/>
<dbReference type="PRO" id="PR:Q9M0G9"/>
<dbReference type="Proteomes" id="UP000006548">
    <property type="component" value="Chromosome 4"/>
</dbReference>
<dbReference type="ExpressionAtlas" id="Q9M0G9">
    <property type="expression patterns" value="baseline and differential"/>
</dbReference>
<dbReference type="GO" id="GO:0005743">
    <property type="term" value="C:mitochondrial inner membrane"/>
    <property type="evidence" value="ECO:0007669"/>
    <property type="project" value="UniProtKB-SubCell"/>
</dbReference>
<dbReference type="GO" id="GO:0005739">
    <property type="term" value="C:mitochondrion"/>
    <property type="evidence" value="ECO:0000314"/>
    <property type="project" value="UniProtKB"/>
</dbReference>
<dbReference type="GO" id="GO:0140359">
    <property type="term" value="F:ABC-type transporter activity"/>
    <property type="evidence" value="ECO:0007669"/>
    <property type="project" value="InterPro"/>
</dbReference>
<dbReference type="GO" id="GO:0005524">
    <property type="term" value="F:ATP binding"/>
    <property type="evidence" value="ECO:0007669"/>
    <property type="project" value="UniProtKB-KW"/>
</dbReference>
<dbReference type="GO" id="GO:0016887">
    <property type="term" value="F:ATP hydrolysis activity"/>
    <property type="evidence" value="ECO:0007669"/>
    <property type="project" value="InterPro"/>
</dbReference>
<dbReference type="GO" id="GO:0006879">
    <property type="term" value="P:intracellular iron ion homeostasis"/>
    <property type="evidence" value="ECO:0000250"/>
    <property type="project" value="UniProtKB"/>
</dbReference>
<dbReference type="GO" id="GO:0006826">
    <property type="term" value="P:iron ion transport"/>
    <property type="evidence" value="ECO:0007669"/>
    <property type="project" value="UniProtKB-KW"/>
</dbReference>
<dbReference type="GO" id="GO:0046686">
    <property type="term" value="P:response to cadmium ion"/>
    <property type="evidence" value="ECO:0000303"/>
    <property type="project" value="UniProtKB"/>
</dbReference>
<dbReference type="CDD" id="cd18582">
    <property type="entry name" value="ABC_6TM_ATM1_ABCB7"/>
    <property type="match status" value="1"/>
</dbReference>
<dbReference type="CDD" id="cd03253">
    <property type="entry name" value="ABCC_ATM1_transporter"/>
    <property type="match status" value="1"/>
</dbReference>
<dbReference type="FunFam" id="3.40.50.300:FF:001038">
    <property type="entry name" value="ABC transporter B family member 25"/>
    <property type="match status" value="1"/>
</dbReference>
<dbReference type="FunFam" id="1.20.1560.10:FF:000004">
    <property type="entry name" value="ATP-binding cassette sub-family B member 7"/>
    <property type="match status" value="1"/>
</dbReference>
<dbReference type="Gene3D" id="1.20.1560.10">
    <property type="entry name" value="ABC transporter type 1, transmembrane domain"/>
    <property type="match status" value="1"/>
</dbReference>
<dbReference type="Gene3D" id="3.40.50.300">
    <property type="entry name" value="P-loop containing nucleotide triphosphate hydrolases"/>
    <property type="match status" value="1"/>
</dbReference>
<dbReference type="InterPro" id="IPR003593">
    <property type="entry name" value="AAA+_ATPase"/>
</dbReference>
<dbReference type="InterPro" id="IPR011527">
    <property type="entry name" value="ABC1_TM_dom"/>
</dbReference>
<dbReference type="InterPro" id="IPR036640">
    <property type="entry name" value="ABC1_TM_sf"/>
</dbReference>
<dbReference type="InterPro" id="IPR003439">
    <property type="entry name" value="ABC_transporter-like_ATP-bd"/>
</dbReference>
<dbReference type="InterPro" id="IPR017871">
    <property type="entry name" value="ABC_transporter-like_CS"/>
</dbReference>
<dbReference type="InterPro" id="IPR027417">
    <property type="entry name" value="P-loop_NTPase"/>
</dbReference>
<dbReference type="InterPro" id="IPR039421">
    <property type="entry name" value="Type_1_exporter"/>
</dbReference>
<dbReference type="PANTHER" id="PTHR24221:SF494">
    <property type="entry name" value="ABC TRANSPORTER B FAMILY MEMBER 23, MITOCHONDRIAL-RELATED"/>
    <property type="match status" value="1"/>
</dbReference>
<dbReference type="PANTHER" id="PTHR24221">
    <property type="entry name" value="ATP-BINDING CASSETTE SUB-FAMILY B"/>
    <property type="match status" value="1"/>
</dbReference>
<dbReference type="Pfam" id="PF00664">
    <property type="entry name" value="ABC_membrane"/>
    <property type="match status" value="1"/>
</dbReference>
<dbReference type="Pfam" id="PF00005">
    <property type="entry name" value="ABC_tran"/>
    <property type="match status" value="1"/>
</dbReference>
<dbReference type="SMART" id="SM00382">
    <property type="entry name" value="AAA"/>
    <property type="match status" value="1"/>
</dbReference>
<dbReference type="SUPFAM" id="SSF90123">
    <property type="entry name" value="ABC transporter transmembrane region"/>
    <property type="match status" value="1"/>
</dbReference>
<dbReference type="SUPFAM" id="SSF52540">
    <property type="entry name" value="P-loop containing nucleoside triphosphate hydrolases"/>
    <property type="match status" value="1"/>
</dbReference>
<dbReference type="PROSITE" id="PS50929">
    <property type="entry name" value="ABC_TM1F"/>
    <property type="match status" value="1"/>
</dbReference>
<dbReference type="PROSITE" id="PS00211">
    <property type="entry name" value="ABC_TRANSPORTER_1"/>
    <property type="match status" value="1"/>
</dbReference>
<dbReference type="PROSITE" id="PS50893">
    <property type="entry name" value="ABC_TRANSPORTER_2"/>
    <property type="match status" value="1"/>
</dbReference>
<feature type="transit peptide" description="Mitochondrion" evidence="2">
    <location>
        <begin position="1"/>
        <end position="75"/>
    </location>
</feature>
<feature type="chain" id="PRO_0000379133" description="ABC transporter B family member 24, mitochondrial">
    <location>
        <begin position="76"/>
        <end position="680"/>
    </location>
</feature>
<feature type="transmembrane region" description="Helical" evidence="4">
    <location>
        <begin position="109"/>
        <end position="129"/>
    </location>
</feature>
<feature type="transmembrane region" description="Helical" evidence="4">
    <location>
        <begin position="145"/>
        <end position="165"/>
    </location>
</feature>
<feature type="transmembrane region" description="Helical" evidence="4">
    <location>
        <begin position="232"/>
        <end position="252"/>
    </location>
</feature>
<feature type="transmembrane region" description="Helical" evidence="4">
    <location>
        <begin position="255"/>
        <end position="275"/>
    </location>
</feature>
<feature type="transmembrane region" description="Helical" evidence="4">
    <location>
        <begin position="340"/>
        <end position="360"/>
    </location>
</feature>
<feature type="transmembrane region" description="Helical" evidence="4">
    <location>
        <begin position="376"/>
        <end position="396"/>
    </location>
</feature>
<feature type="domain" description="ABC transmembrane type-1" evidence="4">
    <location>
        <begin position="108"/>
        <end position="402"/>
    </location>
</feature>
<feature type="domain" description="ABC transporter" evidence="3">
    <location>
        <begin position="439"/>
        <end position="673"/>
    </location>
</feature>
<feature type="binding site" evidence="1">
    <location>
        <position position="448"/>
    </location>
    <ligand>
        <name>ATP</name>
        <dbReference type="ChEBI" id="CHEBI:30616"/>
    </ligand>
</feature>
<feature type="binding site" evidence="3">
    <location>
        <begin position="472"/>
        <end position="483"/>
    </location>
    <ligand>
        <name>ATP</name>
        <dbReference type="ChEBI" id="CHEBI:30616"/>
    </ligand>
</feature>
<evidence type="ECO:0000250" key="1"/>
<evidence type="ECO:0000255" key="2"/>
<evidence type="ECO:0000255" key="3">
    <source>
        <dbReference type="PROSITE-ProRule" id="PRU00434"/>
    </source>
</evidence>
<evidence type="ECO:0000255" key="4">
    <source>
        <dbReference type="PROSITE-ProRule" id="PRU00441"/>
    </source>
</evidence>
<evidence type="ECO:0000269" key="5">
    <source>
    </source>
</evidence>
<evidence type="ECO:0000269" key="6">
    <source>
    </source>
</evidence>
<evidence type="ECO:0000269" key="7">
    <source>
    </source>
</evidence>
<evidence type="ECO:0000269" key="8">
    <source>
    </source>
</evidence>
<evidence type="ECO:0000305" key="9"/>
<accession>Q9M0G9</accession>
<protein>
    <recommendedName>
        <fullName>ABC transporter B family member 24, mitochondrial</fullName>
        <shortName>ABC transporter ABCB.24</shortName>
        <shortName>AtABCB24</shortName>
    </recommendedName>
    <alternativeName>
        <fullName>ABC transporter of the mitochondrion 2</fullName>
        <shortName>AtATM2</shortName>
        <shortName>Iron-sulfur clusters transporter ATM2</shortName>
    </alternativeName>
    <alternativeName>
        <fullName>Protein STARIK 3</fullName>
    </alternativeName>
</protein>
<reference key="1">
    <citation type="journal article" date="2007" name="J. Biol. Chem.">
        <title>Functional characterization of AtATM1, AtATM2, and AtATM3, a subfamily of Arabidopsis half-molecule ATP-binding cassette transporters implicated in iron homeostasis.</title>
        <authorList>
            <person name="Chen S."/>
            <person name="Sanchez-Fernandez R."/>
            <person name="Lyver E.R."/>
            <person name="Dancis A."/>
            <person name="Rea P.A."/>
        </authorList>
    </citation>
    <scope>NUCLEOTIDE SEQUENCE [MRNA]</scope>
    <scope>TISSUE SPECIFICITY</scope>
    <scope>INDUCTION BY IRON DEPRIVATION</scope>
    <scope>SUBCELLULAR LOCATION</scope>
    <source>
        <strain>cv. Columbia</strain>
    </source>
</reference>
<reference key="2">
    <citation type="journal article" date="1999" name="Nature">
        <title>Sequence and analysis of chromosome 4 of the plant Arabidopsis thaliana.</title>
        <authorList>
            <person name="Mayer K.F.X."/>
            <person name="Schueller C."/>
            <person name="Wambutt R."/>
            <person name="Murphy G."/>
            <person name="Volckaert G."/>
            <person name="Pohl T."/>
            <person name="Duesterhoeft A."/>
            <person name="Stiekema W."/>
            <person name="Entian K.-D."/>
            <person name="Terryn N."/>
            <person name="Harris B."/>
            <person name="Ansorge W."/>
            <person name="Brandt P."/>
            <person name="Grivell L.A."/>
            <person name="Rieger M."/>
            <person name="Weichselgartner M."/>
            <person name="de Simone V."/>
            <person name="Obermaier B."/>
            <person name="Mache R."/>
            <person name="Mueller M."/>
            <person name="Kreis M."/>
            <person name="Delseny M."/>
            <person name="Puigdomenech P."/>
            <person name="Watson M."/>
            <person name="Schmidtheini T."/>
            <person name="Reichert B."/>
            <person name="Portetelle D."/>
            <person name="Perez-Alonso M."/>
            <person name="Boutry M."/>
            <person name="Bancroft I."/>
            <person name="Vos P."/>
            <person name="Hoheisel J."/>
            <person name="Zimmermann W."/>
            <person name="Wedler H."/>
            <person name="Ridley P."/>
            <person name="Langham S.-A."/>
            <person name="McCullagh B."/>
            <person name="Bilham L."/>
            <person name="Robben J."/>
            <person name="van der Schueren J."/>
            <person name="Grymonprez B."/>
            <person name="Chuang Y.-J."/>
            <person name="Vandenbussche F."/>
            <person name="Braeken M."/>
            <person name="Weltjens I."/>
            <person name="Voet M."/>
            <person name="Bastiaens I."/>
            <person name="Aert R."/>
            <person name="Defoor E."/>
            <person name="Weitzenegger T."/>
            <person name="Bothe G."/>
            <person name="Ramsperger U."/>
            <person name="Hilbert H."/>
            <person name="Braun M."/>
            <person name="Holzer E."/>
            <person name="Brandt A."/>
            <person name="Peters S."/>
            <person name="van Staveren M."/>
            <person name="Dirkse W."/>
            <person name="Mooijman P."/>
            <person name="Klein Lankhorst R."/>
            <person name="Rose M."/>
            <person name="Hauf J."/>
            <person name="Koetter P."/>
            <person name="Berneiser S."/>
            <person name="Hempel S."/>
            <person name="Feldpausch M."/>
            <person name="Lamberth S."/>
            <person name="Van den Daele H."/>
            <person name="De Keyser A."/>
            <person name="Buysshaert C."/>
            <person name="Gielen J."/>
            <person name="Villarroel R."/>
            <person name="De Clercq R."/>
            <person name="van Montagu M."/>
            <person name="Rogers J."/>
            <person name="Cronin A."/>
            <person name="Quail M.A."/>
            <person name="Bray-Allen S."/>
            <person name="Clark L."/>
            <person name="Doggett J."/>
            <person name="Hall S."/>
            <person name="Kay M."/>
            <person name="Lennard N."/>
            <person name="McLay K."/>
            <person name="Mayes R."/>
            <person name="Pettett A."/>
            <person name="Rajandream M.A."/>
            <person name="Lyne M."/>
            <person name="Benes V."/>
            <person name="Rechmann S."/>
            <person name="Borkova D."/>
            <person name="Bloecker H."/>
            <person name="Scharfe M."/>
            <person name="Grimm M."/>
            <person name="Loehnert T.-H."/>
            <person name="Dose S."/>
            <person name="de Haan M."/>
            <person name="Maarse A.C."/>
            <person name="Schaefer M."/>
            <person name="Mueller-Auer S."/>
            <person name="Gabel C."/>
            <person name="Fuchs M."/>
            <person name="Fartmann B."/>
            <person name="Granderath K."/>
            <person name="Dauner D."/>
            <person name="Herzl A."/>
            <person name="Neumann S."/>
            <person name="Argiriou A."/>
            <person name="Vitale D."/>
            <person name="Liguori R."/>
            <person name="Piravandi E."/>
            <person name="Massenet O."/>
            <person name="Quigley F."/>
            <person name="Clabauld G."/>
            <person name="Muendlein A."/>
            <person name="Felber R."/>
            <person name="Schnabl S."/>
            <person name="Hiller R."/>
            <person name="Schmidt W."/>
            <person name="Lecharny A."/>
            <person name="Aubourg S."/>
            <person name="Chefdor F."/>
            <person name="Cooke R."/>
            <person name="Berger C."/>
            <person name="Monfort A."/>
            <person name="Casacuberta E."/>
            <person name="Gibbons T."/>
            <person name="Weber N."/>
            <person name="Vandenbol M."/>
            <person name="Bargues M."/>
            <person name="Terol J."/>
            <person name="Torres A."/>
            <person name="Perez-Perez A."/>
            <person name="Purnelle B."/>
            <person name="Bent E."/>
            <person name="Johnson S."/>
            <person name="Tacon D."/>
            <person name="Jesse T."/>
            <person name="Heijnen L."/>
            <person name="Schwarz S."/>
            <person name="Scholler P."/>
            <person name="Heber S."/>
            <person name="Francs P."/>
            <person name="Bielke C."/>
            <person name="Frishman D."/>
            <person name="Haase D."/>
            <person name="Lemcke K."/>
            <person name="Mewes H.-W."/>
            <person name="Stocker S."/>
            <person name="Zaccaria P."/>
            <person name="Bevan M."/>
            <person name="Wilson R.K."/>
            <person name="de la Bastide M."/>
            <person name="Habermann K."/>
            <person name="Parnell L."/>
            <person name="Dedhia N."/>
            <person name="Gnoj L."/>
            <person name="Schutz K."/>
            <person name="Huang E."/>
            <person name="Spiegel L."/>
            <person name="Sekhon M."/>
            <person name="Murray J."/>
            <person name="Sheet P."/>
            <person name="Cordes M."/>
            <person name="Abu-Threideh J."/>
            <person name="Stoneking T."/>
            <person name="Kalicki J."/>
            <person name="Graves T."/>
            <person name="Harmon G."/>
            <person name="Edwards J."/>
            <person name="Latreille P."/>
            <person name="Courtney L."/>
            <person name="Cloud J."/>
            <person name="Abbott A."/>
            <person name="Scott K."/>
            <person name="Johnson D."/>
            <person name="Minx P."/>
            <person name="Bentley D."/>
            <person name="Fulton B."/>
            <person name="Miller N."/>
            <person name="Greco T."/>
            <person name="Kemp K."/>
            <person name="Kramer J."/>
            <person name="Fulton L."/>
            <person name="Mardis E."/>
            <person name="Dante M."/>
            <person name="Pepin K."/>
            <person name="Hillier L.W."/>
            <person name="Nelson J."/>
            <person name="Spieth J."/>
            <person name="Ryan E."/>
            <person name="Andrews S."/>
            <person name="Geisel C."/>
            <person name="Layman D."/>
            <person name="Du H."/>
            <person name="Ali J."/>
            <person name="Berghoff A."/>
            <person name="Jones K."/>
            <person name="Drone K."/>
            <person name="Cotton M."/>
            <person name="Joshu C."/>
            <person name="Antonoiu B."/>
            <person name="Zidanic M."/>
            <person name="Strong C."/>
            <person name="Sun H."/>
            <person name="Lamar B."/>
            <person name="Yordan C."/>
            <person name="Ma P."/>
            <person name="Zhong J."/>
            <person name="Preston R."/>
            <person name="Vil D."/>
            <person name="Shekher M."/>
            <person name="Matero A."/>
            <person name="Shah R."/>
            <person name="Swaby I.K."/>
            <person name="O'Shaughnessy A."/>
            <person name="Rodriguez M."/>
            <person name="Hoffman J."/>
            <person name="Till S."/>
            <person name="Granat S."/>
            <person name="Shohdy N."/>
            <person name="Hasegawa A."/>
            <person name="Hameed A."/>
            <person name="Lodhi M."/>
            <person name="Johnson A."/>
            <person name="Chen E."/>
            <person name="Marra M.A."/>
            <person name="Martienssen R."/>
            <person name="McCombie W.R."/>
        </authorList>
    </citation>
    <scope>NUCLEOTIDE SEQUENCE [LARGE SCALE GENOMIC DNA]</scope>
    <source>
        <strain>cv. Columbia</strain>
    </source>
</reference>
<reference key="3">
    <citation type="journal article" date="2017" name="Plant J.">
        <title>Araport11: a complete reannotation of the Arabidopsis thaliana reference genome.</title>
        <authorList>
            <person name="Cheng C.Y."/>
            <person name="Krishnakumar V."/>
            <person name="Chan A.P."/>
            <person name="Thibaud-Nissen F."/>
            <person name="Schobel S."/>
            <person name="Town C.D."/>
        </authorList>
    </citation>
    <scope>GENOME REANNOTATION</scope>
    <source>
        <strain>cv. Columbia</strain>
    </source>
</reference>
<reference key="4">
    <citation type="journal article" date="2001" name="J. Biol. Chem.">
        <title>The Arabidopsis thaliana ABC protein superfamily, a complete inventory.</title>
        <authorList>
            <person name="Sanchez-Fernandez R."/>
            <person name="Davies T.G."/>
            <person name="Coleman J.O."/>
            <person name="Rea P.A."/>
        </authorList>
    </citation>
    <scope>GENE FAMILY</scope>
    <scope>NOMENCLATURE</scope>
</reference>
<reference key="5">
    <citation type="journal article" date="2002" name="Planta">
        <title>Multifunctionality of plant ABC transporters -- more than just detoxifiers.</title>
        <authorList>
            <person name="Martinoia E."/>
            <person name="Klein M."/>
            <person name="Geisler M."/>
            <person name="Bovet L."/>
            <person name="Forestier C."/>
            <person name="Kolukisaoglu H.U."/>
            <person name="Mueller-Roeber B."/>
            <person name="Schulz B."/>
        </authorList>
    </citation>
    <scope>GENE FAMILY</scope>
</reference>
<reference key="6">
    <citation type="journal article" date="2004" name="Plant Cell">
        <title>Experimental analysis of the Arabidopsis mitochondrial proteome highlights signaling and regulatory components, provides assessment of targeting prediction programs, and indicates plant-specific mitochondrial proteins.</title>
        <authorList>
            <person name="Heazlewood J.L."/>
            <person name="Tonti-Filippini J.S."/>
            <person name="Gout A.M."/>
            <person name="Day D.A."/>
            <person name="Whelan J."/>
            <person name="Millar A.H."/>
        </authorList>
    </citation>
    <scope>IDENTIFICATION BY MASS SPECTROMETRY</scope>
    <scope>SUBCELLULAR LOCATION [LARGE SCALE ANALYSIS]</scope>
    <source>
        <strain>cv. Landsberg erecta</strain>
    </source>
</reference>
<reference key="7">
    <citation type="journal article" date="2008" name="Trends Plant Sci.">
        <title>Plant ABC proteins - a unified nomenclature and updated inventory.</title>
        <authorList>
            <person name="Verrier P.J."/>
            <person name="Bird D."/>
            <person name="Burla B."/>
            <person name="Dassa E."/>
            <person name="Forestier C."/>
            <person name="Geisler M."/>
            <person name="Klein M."/>
            <person name="Kolukisaoglu H.U."/>
            <person name="Lee Y."/>
            <person name="Martinoia E."/>
            <person name="Murphy A."/>
            <person name="Rea P.A."/>
            <person name="Samuels L."/>
            <person name="Schulz B."/>
            <person name="Spalding E.J."/>
            <person name="Yazaki K."/>
            <person name="Theodoulou F.L."/>
        </authorList>
    </citation>
    <scope>GENE FAMILY</scope>
    <scope>NOMENCLATURE</scope>
</reference>
<reference key="8">
    <citation type="journal article" date="2009" name="Plant Physiol.">
        <title>An allelic mutant series of ATM3 reveals its key role in the biogenesis of cytosolic iron-sulfur proteins in Arabidopsis.</title>
        <authorList>
            <person name="Bernard D.G."/>
            <person name="Cheng Y."/>
            <person name="Zhao Y."/>
            <person name="Balk J."/>
        </authorList>
    </citation>
    <scope>DISRUPTION PHENOTYPE</scope>
</reference>
<reference key="9">
    <citation type="journal article" date="2010" name="Plant Cell">
        <title>A novel role for Arabidopsis mitochondrial ABC transporter ATM3 in molybdenum cofactor biosynthesis.</title>
        <authorList>
            <person name="Teschner J."/>
            <person name="Lachmann N."/>
            <person name="Schulze J."/>
            <person name="Geisler M."/>
            <person name="Selbach K."/>
            <person name="Santamaria-Araujo J."/>
            <person name="Balk J."/>
            <person name="Mendel R.R."/>
            <person name="Bittner F."/>
        </authorList>
    </citation>
    <scope>FUNCTION</scope>
</reference>
<proteinExistence type="evidence at protein level"/>
<organism>
    <name type="scientific">Arabidopsis thaliana</name>
    <name type="common">Mouse-ear cress</name>
    <dbReference type="NCBI Taxonomy" id="3702"/>
    <lineage>
        <taxon>Eukaryota</taxon>
        <taxon>Viridiplantae</taxon>
        <taxon>Streptophyta</taxon>
        <taxon>Embryophyta</taxon>
        <taxon>Tracheophyta</taxon>
        <taxon>Spermatophyta</taxon>
        <taxon>Magnoliopsida</taxon>
        <taxon>eudicotyledons</taxon>
        <taxon>Gunneridae</taxon>
        <taxon>Pentapetalae</taxon>
        <taxon>rosids</taxon>
        <taxon>malvids</taxon>
        <taxon>Brassicales</taxon>
        <taxon>Brassicaceae</taxon>
        <taxon>Camelineae</taxon>
        <taxon>Arabidopsis</taxon>
    </lineage>
</organism>
<gene>
    <name type="primary">ABCB24</name>
    <name type="synonym">ATM2</name>
    <name type="synonym">STA3</name>
    <name type="ordered locus">At4g28620</name>
    <name type="ORF">T5F17.70</name>
</gene>
<sequence length="680" mass="76050">MMRVSQLQLCRTSLSYRLRSGYHHHHHLHHSFFKLIKRNSILESPPTNASHQSPSPITPMVNARVMFFSTSTSAPHPEKINRTSSENILRMISSYLWMKDNPKLCFRVISAFACLVGAKFLNVQVPFLFKVAIDWLSSSSFVDSNPYLVAAFATPSSVLIGYGIARSGSSAFNELRTSVFSKVALRTIRTISRKVLSRLHDLDLRYHLNRDTGALNRIIDRGSRAINTILSAMVFNIMPTILEISMVSCILAYKFGAVYALITCLSVGSYIAFTLAMTQWRIKIRKAMNEAENDASTRAIDSLINYETVKYFNNEDYEARKYDQLHENYEDAALQSRKSFALLNFGQSFIFSTALSTAMVLCSQGIMNGQMTVGDLVMVNGLLFQLSLPLYFLGVVYSDTVQGLVDMKSMFKFLEERSDIGDKDIDRKLPPLVLKGGSISFENVHFSYLPERKILDGISFEVPAGKSVAIVGSSGSGKSTILRMIFRFFDVDSGNVKIDGQDIKEVRLESLRSSIGVVPQDTVLFNDTIFHNIHYGNLSATEEEVYNAARRAAIHDTIMKFPDKYSTAVGERGLMLSGGEKQRVALARAFLKSPAILLCDEATSALDSKTEAEIMKTLRSLASNRTCIFIAHRLTTAMQCDEILVMEKGKVVEKGTHEVLLGKSGRYAKLWTQQNSKLEV</sequence>
<comment type="function">
    <text evidence="1 8">Performs an essential function in the generation of cytoplasmic iron-sulfur proteins by mediating export of Fe/S cluster precursors synthesized by NFS1 and other mitochondrial proteins (By similarity). Not involved in the export of cyclic pyranopterin monophosphate (cPMP) from mitochondria to the cytosol.</text>
</comment>
<comment type="subunit">
    <text evidence="1">Homodimer.</text>
</comment>
<comment type="subcellular location">
    <subcellularLocation>
        <location evidence="5 6">Mitochondrion inner membrane</location>
        <topology evidence="4 5 6">Multi-pass membrane protein</topology>
    </subcellularLocation>
</comment>
<comment type="tissue specificity">
    <text evidence="6">Mostly expressed at low levels in roots and flowers.</text>
</comment>
<comment type="induction">
    <text evidence="6">In leaves after iron deprivation.</text>
</comment>
<comment type="disruption phenotype">
    <text evidence="7">No visible phenotype.</text>
</comment>
<comment type="similarity">
    <text evidence="9">Belongs to the ABC transporter superfamily. ABCB family. Heavy Metal importer (TC 3.A.1.210) subfamily.</text>
</comment>
<name>AB24B_ARATH</name>